<gene>
    <name type="ordered locus">At1g34490</name>
    <name type="ORF">F12K21.19</name>
    <name type="ORF">F12K21.28</name>
</gene>
<comment type="function">
    <text evidence="1">Catalyzes the final step in the synthesis of long-chain linear esters (waxes).</text>
</comment>
<comment type="catalytic activity">
    <reaction>
        <text>a long chain fatty alcohol + a fatty acyl-CoA = a wax ester + CoA</text>
        <dbReference type="Rhea" id="RHEA:38443"/>
        <dbReference type="ChEBI" id="CHEBI:10036"/>
        <dbReference type="ChEBI" id="CHEBI:17135"/>
        <dbReference type="ChEBI" id="CHEBI:57287"/>
        <dbReference type="ChEBI" id="CHEBI:77636"/>
        <dbReference type="EC" id="2.3.1.75"/>
    </reaction>
</comment>
<comment type="subcellular location">
    <subcellularLocation>
        <location evidence="3">Membrane</location>
        <topology evidence="3">Multi-pass membrane protein</topology>
    </subcellularLocation>
</comment>
<comment type="similarity">
    <text evidence="3">Belongs to the wax synthase family.</text>
</comment>
<comment type="sequence caution" evidence="3">
    <conflict type="erroneous gene model prediction">
        <sequence resource="EMBL-CDS" id="AAF79268"/>
    </conflict>
    <text>The predicted gene has been split into 2 genes: At1g34490 and At1g34500.</text>
</comment>
<feature type="chain" id="PRO_0000380686" description="Putative long-chain-alcohol O-fatty-acyltransferase 10">
    <location>
        <begin position="1"/>
        <end position="337"/>
    </location>
</feature>
<feature type="transmembrane region" description="Helical" evidence="2">
    <location>
        <begin position="7"/>
        <end position="27"/>
    </location>
</feature>
<feature type="transmembrane region" description="Helical" evidence="2">
    <location>
        <begin position="38"/>
        <end position="58"/>
    </location>
</feature>
<feature type="transmembrane region" description="Helical" evidence="2">
    <location>
        <begin position="59"/>
        <end position="79"/>
    </location>
</feature>
<feature type="transmembrane region" description="Helical" evidence="2">
    <location>
        <begin position="82"/>
        <end position="102"/>
    </location>
</feature>
<feature type="transmembrane region" description="Helical" evidence="2">
    <location>
        <begin position="142"/>
        <end position="162"/>
    </location>
</feature>
<feature type="transmembrane region" description="Helical" evidence="2">
    <location>
        <begin position="228"/>
        <end position="248"/>
    </location>
</feature>
<feature type="transmembrane region" description="Helical" evidence="2">
    <location>
        <begin position="254"/>
        <end position="274"/>
    </location>
</feature>
<feature type="transmembrane region" description="Helical" evidence="2">
    <location>
        <begin position="285"/>
        <end position="305"/>
    </location>
</feature>
<organism>
    <name type="scientific">Arabidopsis thaliana</name>
    <name type="common">Mouse-ear cress</name>
    <dbReference type="NCBI Taxonomy" id="3702"/>
    <lineage>
        <taxon>Eukaryota</taxon>
        <taxon>Viridiplantae</taxon>
        <taxon>Streptophyta</taxon>
        <taxon>Embryophyta</taxon>
        <taxon>Tracheophyta</taxon>
        <taxon>Spermatophyta</taxon>
        <taxon>Magnoliopsida</taxon>
        <taxon>eudicotyledons</taxon>
        <taxon>Gunneridae</taxon>
        <taxon>Pentapetalae</taxon>
        <taxon>rosids</taxon>
        <taxon>malvids</taxon>
        <taxon>Brassicales</taxon>
        <taxon>Brassicaceae</taxon>
        <taxon>Camelineae</taxon>
        <taxon>Arabidopsis</taxon>
    </lineage>
</organism>
<evidence type="ECO:0000250" key="1"/>
<evidence type="ECO:0000255" key="2"/>
<evidence type="ECO:0000305" key="3"/>
<name>WAXSA_ARATH</name>
<keyword id="KW-0012">Acyltransferase</keyword>
<keyword id="KW-0444">Lipid biosynthesis</keyword>
<keyword id="KW-0443">Lipid metabolism</keyword>
<keyword id="KW-0472">Membrane</keyword>
<keyword id="KW-1185">Reference proteome</keyword>
<keyword id="KW-0808">Transferase</keyword>
<keyword id="KW-0812">Transmembrane</keyword>
<keyword id="KW-1133">Transmembrane helix</keyword>
<proteinExistence type="inferred from homology"/>
<accession>Q3ED15</accession>
<accession>Q9LNK9</accession>
<reference key="1">
    <citation type="journal article" date="2000" name="Nature">
        <title>Sequence and analysis of chromosome 1 of the plant Arabidopsis thaliana.</title>
        <authorList>
            <person name="Theologis A."/>
            <person name="Ecker J.R."/>
            <person name="Palm C.J."/>
            <person name="Federspiel N.A."/>
            <person name="Kaul S."/>
            <person name="White O."/>
            <person name="Alonso J."/>
            <person name="Altafi H."/>
            <person name="Araujo R."/>
            <person name="Bowman C.L."/>
            <person name="Brooks S.Y."/>
            <person name="Buehler E."/>
            <person name="Chan A."/>
            <person name="Chao Q."/>
            <person name="Chen H."/>
            <person name="Cheuk R.F."/>
            <person name="Chin C.W."/>
            <person name="Chung M.K."/>
            <person name="Conn L."/>
            <person name="Conway A.B."/>
            <person name="Conway A.R."/>
            <person name="Creasy T.H."/>
            <person name="Dewar K."/>
            <person name="Dunn P."/>
            <person name="Etgu P."/>
            <person name="Feldblyum T.V."/>
            <person name="Feng J.-D."/>
            <person name="Fong B."/>
            <person name="Fujii C.Y."/>
            <person name="Gill J.E."/>
            <person name="Goldsmith A.D."/>
            <person name="Haas B."/>
            <person name="Hansen N.F."/>
            <person name="Hughes B."/>
            <person name="Huizar L."/>
            <person name="Hunter J.L."/>
            <person name="Jenkins J."/>
            <person name="Johnson-Hopson C."/>
            <person name="Khan S."/>
            <person name="Khaykin E."/>
            <person name="Kim C.J."/>
            <person name="Koo H.L."/>
            <person name="Kremenetskaia I."/>
            <person name="Kurtz D.B."/>
            <person name="Kwan A."/>
            <person name="Lam B."/>
            <person name="Langin-Hooper S."/>
            <person name="Lee A."/>
            <person name="Lee J.M."/>
            <person name="Lenz C.A."/>
            <person name="Li J.H."/>
            <person name="Li Y.-P."/>
            <person name="Lin X."/>
            <person name="Liu S.X."/>
            <person name="Liu Z.A."/>
            <person name="Luros J.S."/>
            <person name="Maiti R."/>
            <person name="Marziali A."/>
            <person name="Militscher J."/>
            <person name="Miranda M."/>
            <person name="Nguyen M."/>
            <person name="Nierman W.C."/>
            <person name="Osborne B.I."/>
            <person name="Pai G."/>
            <person name="Peterson J."/>
            <person name="Pham P.K."/>
            <person name="Rizzo M."/>
            <person name="Rooney T."/>
            <person name="Rowley D."/>
            <person name="Sakano H."/>
            <person name="Salzberg S.L."/>
            <person name="Schwartz J.R."/>
            <person name="Shinn P."/>
            <person name="Southwick A.M."/>
            <person name="Sun H."/>
            <person name="Tallon L.J."/>
            <person name="Tambunga G."/>
            <person name="Toriumi M.J."/>
            <person name="Town C.D."/>
            <person name="Utterback T."/>
            <person name="Van Aken S."/>
            <person name="Vaysberg M."/>
            <person name="Vysotskaia V.S."/>
            <person name="Walker M."/>
            <person name="Wu D."/>
            <person name="Yu G."/>
            <person name="Fraser C.M."/>
            <person name="Venter J.C."/>
            <person name="Davis R.W."/>
        </authorList>
    </citation>
    <scope>NUCLEOTIDE SEQUENCE [LARGE SCALE GENOMIC DNA]</scope>
    <source>
        <strain>cv. Columbia</strain>
    </source>
</reference>
<reference key="2">
    <citation type="journal article" date="2017" name="Plant J.">
        <title>Araport11: a complete reannotation of the Arabidopsis thaliana reference genome.</title>
        <authorList>
            <person name="Cheng C.Y."/>
            <person name="Krishnakumar V."/>
            <person name="Chan A.P."/>
            <person name="Thibaud-Nissen F."/>
            <person name="Schobel S."/>
            <person name="Town C.D."/>
        </authorList>
    </citation>
    <scope>GENOME REANNOTATION</scope>
    <source>
        <strain>cv. Columbia</strain>
    </source>
</reference>
<dbReference type="EC" id="2.3.1.75"/>
<dbReference type="EMBL" id="AC023279">
    <property type="protein sequence ID" value="AAF79268.1"/>
    <property type="status" value="ALT_SEQ"/>
    <property type="molecule type" value="Genomic_DNA"/>
</dbReference>
<dbReference type="EMBL" id="CP002684">
    <property type="protein sequence ID" value="AEE31719.1"/>
    <property type="molecule type" value="Genomic_DNA"/>
</dbReference>
<dbReference type="RefSeq" id="NP_174708.1">
    <property type="nucleotide sequence ID" value="NM_103171.2"/>
</dbReference>
<dbReference type="STRING" id="3702.Q3ED15"/>
<dbReference type="PaxDb" id="3702-AT1G34490.1"/>
<dbReference type="EnsemblPlants" id="AT1G34490.1">
    <property type="protein sequence ID" value="AT1G34490.1"/>
    <property type="gene ID" value="AT1G34490"/>
</dbReference>
<dbReference type="GeneID" id="840351"/>
<dbReference type="Gramene" id="AT1G34490.1">
    <property type="protein sequence ID" value="AT1G34490.1"/>
    <property type="gene ID" value="AT1G34490"/>
</dbReference>
<dbReference type="KEGG" id="ath:AT1G34490"/>
<dbReference type="Araport" id="AT1G34490"/>
<dbReference type="TAIR" id="AT1G34490"/>
<dbReference type="eggNOG" id="ENOG502S7Z7">
    <property type="taxonomic scope" value="Eukaryota"/>
</dbReference>
<dbReference type="HOGENOM" id="CLU_045902_0_0_1"/>
<dbReference type="InParanoid" id="Q3ED15"/>
<dbReference type="OMA" id="HEALIYY"/>
<dbReference type="PhylomeDB" id="Q3ED15"/>
<dbReference type="BioCyc" id="ARA:AT1G34490-MONOMER"/>
<dbReference type="BRENDA" id="2.3.1.75">
    <property type="organism ID" value="399"/>
</dbReference>
<dbReference type="PRO" id="PR:Q3ED15"/>
<dbReference type="Proteomes" id="UP000006548">
    <property type="component" value="Chromosome 1"/>
</dbReference>
<dbReference type="ExpressionAtlas" id="Q3ED15">
    <property type="expression patterns" value="baseline and differential"/>
</dbReference>
<dbReference type="GO" id="GO:0016020">
    <property type="term" value="C:membrane"/>
    <property type="evidence" value="ECO:0007669"/>
    <property type="project" value="UniProtKB-SubCell"/>
</dbReference>
<dbReference type="GO" id="GO:0047196">
    <property type="term" value="F:long-chain-alcohol O-fatty-acyltransferase activity"/>
    <property type="evidence" value="ECO:0007669"/>
    <property type="project" value="UniProtKB-EC"/>
</dbReference>
<dbReference type="GO" id="GO:0006629">
    <property type="term" value="P:lipid metabolic process"/>
    <property type="evidence" value="ECO:0007669"/>
    <property type="project" value="UniProtKB-KW"/>
</dbReference>
<dbReference type="InterPro" id="IPR044851">
    <property type="entry name" value="Wax_synthase"/>
</dbReference>
<dbReference type="InterPro" id="IPR032805">
    <property type="entry name" value="Wax_synthase_dom"/>
</dbReference>
<dbReference type="InterPro" id="IPR017088">
    <property type="entry name" value="Wax_synthase_Magnoliopsida"/>
</dbReference>
<dbReference type="PANTHER" id="PTHR31595:SF41">
    <property type="entry name" value="LONG-CHAIN-ALCOHOL O-FATTY-ACYLTRANSFERASE 10-RELATED"/>
    <property type="match status" value="1"/>
</dbReference>
<dbReference type="PANTHER" id="PTHR31595">
    <property type="entry name" value="LONG-CHAIN-ALCOHOL O-FATTY-ACYLTRANSFERASE 3-RELATED"/>
    <property type="match status" value="1"/>
</dbReference>
<dbReference type="Pfam" id="PF13813">
    <property type="entry name" value="MBOAT_2"/>
    <property type="match status" value="1"/>
</dbReference>
<dbReference type="PIRSF" id="PIRSF037006">
    <property type="entry name" value="Wax_synthase"/>
    <property type="match status" value="1"/>
</dbReference>
<protein>
    <recommendedName>
        <fullName>Putative long-chain-alcohol O-fatty-acyltransferase 10</fullName>
        <ecNumber>2.3.1.75</ecNumber>
    </recommendedName>
    <alternativeName>
        <fullName>Wax synthase 10</fullName>
    </alternativeName>
</protein>
<sequence length="337" mass="39009">MEEELKSFVKVWGSAIISVSYCYYIPSKIKRGVHRLLSVLPVCVLFLVLPLFFVFTIFSSTTAFCLSILANFKLILFAFDKGPLLPLPTNLFRFICFTCLPIKLQTKPNSQNHLPKWVLPSKVAIFVLLLNIRSYKILLPPILLLGLYPLHLYIVLDVLLTIVNALLTIILRCDLEPHFNEPYLATSLQDFWGHRWNLMVSAIYRPGVYSPVRSVCQHQMRSDWARFMGCMTTFFVSGLIHELVYFYINREKPTLEVTWFFVLHGVCTAMEIAVKRKMQWSLSPMLLRLITVGFLVVTGDLLFFGQIERSNMLERRANEASLFIDFVKRKVFNYTVS</sequence>